<protein>
    <recommendedName>
        <fullName evidence="1">Phosphate import ATP-binding protein PstB</fullName>
        <ecNumber evidence="1">7.3.2.1</ecNumber>
    </recommendedName>
    <alternativeName>
        <fullName evidence="1">ABC phosphate transporter</fullName>
    </alternativeName>
    <alternativeName>
        <fullName evidence="1">Phosphate-transporting ATPase</fullName>
    </alternativeName>
</protein>
<dbReference type="EC" id="7.3.2.1" evidence="1"/>
<dbReference type="EMBL" id="U00089">
    <property type="protein sequence ID" value="AAB95881.1"/>
    <property type="molecule type" value="Genomic_DNA"/>
</dbReference>
<dbReference type="PIR" id="S73559">
    <property type="entry name" value="S73559"/>
</dbReference>
<dbReference type="RefSeq" id="NP_110298.1">
    <property type="nucleotide sequence ID" value="NC_000912.1"/>
</dbReference>
<dbReference type="RefSeq" id="WP_010874966.1">
    <property type="nucleotide sequence ID" value="NZ_OU342337.1"/>
</dbReference>
<dbReference type="SMR" id="P75186"/>
<dbReference type="STRING" id="272634.MPN_609"/>
<dbReference type="EnsemblBacteria" id="AAB95881">
    <property type="protein sequence ID" value="AAB95881"/>
    <property type="gene ID" value="MPN_609"/>
</dbReference>
<dbReference type="GeneID" id="66608706"/>
<dbReference type="KEGG" id="mpn:MPN_609"/>
<dbReference type="PATRIC" id="fig|272634.6.peg.672"/>
<dbReference type="HOGENOM" id="CLU_000604_1_22_14"/>
<dbReference type="OrthoDB" id="9802185at2"/>
<dbReference type="BioCyc" id="MPNE272634:G1GJ3-984-MONOMER"/>
<dbReference type="Proteomes" id="UP000000808">
    <property type="component" value="Chromosome"/>
</dbReference>
<dbReference type="GO" id="GO:0005886">
    <property type="term" value="C:plasma membrane"/>
    <property type="evidence" value="ECO:0007669"/>
    <property type="project" value="UniProtKB-SubCell"/>
</dbReference>
<dbReference type="GO" id="GO:0005524">
    <property type="term" value="F:ATP binding"/>
    <property type="evidence" value="ECO:0007669"/>
    <property type="project" value="UniProtKB-KW"/>
</dbReference>
<dbReference type="GO" id="GO:0016887">
    <property type="term" value="F:ATP hydrolysis activity"/>
    <property type="evidence" value="ECO:0007669"/>
    <property type="project" value="InterPro"/>
</dbReference>
<dbReference type="GO" id="GO:0015415">
    <property type="term" value="F:ATPase-coupled phosphate ion transmembrane transporter activity"/>
    <property type="evidence" value="ECO:0007669"/>
    <property type="project" value="UniProtKB-EC"/>
</dbReference>
<dbReference type="GO" id="GO:0035435">
    <property type="term" value="P:phosphate ion transmembrane transport"/>
    <property type="evidence" value="ECO:0007669"/>
    <property type="project" value="InterPro"/>
</dbReference>
<dbReference type="CDD" id="cd03260">
    <property type="entry name" value="ABC_PstB_phosphate_transporter"/>
    <property type="match status" value="1"/>
</dbReference>
<dbReference type="Gene3D" id="3.40.50.300">
    <property type="entry name" value="P-loop containing nucleotide triphosphate hydrolases"/>
    <property type="match status" value="1"/>
</dbReference>
<dbReference type="InterPro" id="IPR003593">
    <property type="entry name" value="AAA+_ATPase"/>
</dbReference>
<dbReference type="InterPro" id="IPR003439">
    <property type="entry name" value="ABC_transporter-like_ATP-bd"/>
</dbReference>
<dbReference type="InterPro" id="IPR017871">
    <property type="entry name" value="ABC_transporter-like_CS"/>
</dbReference>
<dbReference type="InterPro" id="IPR027417">
    <property type="entry name" value="P-loop_NTPase"/>
</dbReference>
<dbReference type="InterPro" id="IPR005670">
    <property type="entry name" value="PstB-like"/>
</dbReference>
<dbReference type="NCBIfam" id="TIGR00972">
    <property type="entry name" value="3a0107s01c2"/>
    <property type="match status" value="1"/>
</dbReference>
<dbReference type="PANTHER" id="PTHR43423">
    <property type="entry name" value="ABC TRANSPORTER I FAMILY MEMBER 17"/>
    <property type="match status" value="1"/>
</dbReference>
<dbReference type="PANTHER" id="PTHR43423:SF1">
    <property type="entry name" value="ABC TRANSPORTER I FAMILY MEMBER 17"/>
    <property type="match status" value="1"/>
</dbReference>
<dbReference type="Pfam" id="PF00005">
    <property type="entry name" value="ABC_tran"/>
    <property type="match status" value="1"/>
</dbReference>
<dbReference type="SMART" id="SM00382">
    <property type="entry name" value="AAA"/>
    <property type="match status" value="1"/>
</dbReference>
<dbReference type="SUPFAM" id="SSF52540">
    <property type="entry name" value="P-loop containing nucleoside triphosphate hydrolases"/>
    <property type="match status" value="1"/>
</dbReference>
<dbReference type="PROSITE" id="PS00211">
    <property type="entry name" value="ABC_TRANSPORTER_1"/>
    <property type="match status" value="1"/>
</dbReference>
<dbReference type="PROSITE" id="PS50893">
    <property type="entry name" value="ABC_TRANSPORTER_2"/>
    <property type="match status" value="1"/>
</dbReference>
<dbReference type="PROSITE" id="PS51238">
    <property type="entry name" value="PSTB"/>
    <property type="match status" value="1"/>
</dbReference>
<reference key="1">
    <citation type="journal article" date="1996" name="Nucleic Acids Res.">
        <title>Complete sequence analysis of the genome of the bacterium Mycoplasma pneumoniae.</title>
        <authorList>
            <person name="Himmelreich R."/>
            <person name="Hilbert H."/>
            <person name="Plagens H."/>
            <person name="Pirkl E."/>
            <person name="Li B.-C."/>
            <person name="Herrmann R."/>
        </authorList>
    </citation>
    <scope>NUCLEOTIDE SEQUENCE [LARGE SCALE GENOMIC DNA]</scope>
    <source>
        <strain>ATCC 29342 / M129 / Subtype 1</strain>
    </source>
</reference>
<sequence>MKKGLKTIWHNFIQKREKVKQYRALYEKQIKQYQQKVAKLDPTTKAEEIANLQSEIDVLQRLIKIKNTKDDVVKQDFDKKNVFEIENLNFWYNKDKQVLFDINLKIKRNKITALIGKSGCGKSTFIRCLNKLNDLNENVRWNGKIFFLGKNINSGIINDLTLRTRVGMVFQQLTPFNFSIFENIAYGLRAHGIHNKQAIHEIVEQALKSTALWDEVKDNLHRNANTLSGGQQQRLCIARAIALQPDVLLMDEPTSALDSIATNSIELLIQQLKEKYTIIIVTHSMAQTIRITDETIFFANGRVVEQGTTKQIFTRPKQKETNRYISGRN</sequence>
<name>PSTB_MYCPN</name>
<feature type="chain" id="PRO_0000092847" description="Phosphate import ATP-binding protein PstB">
    <location>
        <begin position="1"/>
        <end position="329"/>
    </location>
</feature>
<feature type="domain" description="ABC transporter" evidence="1">
    <location>
        <begin position="83"/>
        <end position="325"/>
    </location>
</feature>
<feature type="binding site" evidence="1">
    <location>
        <begin position="116"/>
        <end position="123"/>
    </location>
    <ligand>
        <name>ATP</name>
        <dbReference type="ChEBI" id="CHEBI:30616"/>
    </ligand>
</feature>
<gene>
    <name evidence="1" type="primary">pstB</name>
    <name type="ordered locus">MPN_609</name>
    <name type="ORF">MP233</name>
</gene>
<proteinExistence type="inferred from homology"/>
<accession>P75186</accession>
<comment type="function">
    <text evidence="1">Part of the ABC transporter complex PstSACB involved in phosphate import. Responsible for energy coupling to the transport system.</text>
</comment>
<comment type="catalytic activity">
    <reaction evidence="1">
        <text>phosphate(out) + ATP + H2O = ADP + 2 phosphate(in) + H(+)</text>
        <dbReference type="Rhea" id="RHEA:24440"/>
        <dbReference type="ChEBI" id="CHEBI:15377"/>
        <dbReference type="ChEBI" id="CHEBI:15378"/>
        <dbReference type="ChEBI" id="CHEBI:30616"/>
        <dbReference type="ChEBI" id="CHEBI:43474"/>
        <dbReference type="ChEBI" id="CHEBI:456216"/>
        <dbReference type="EC" id="7.3.2.1"/>
    </reaction>
</comment>
<comment type="subunit">
    <text evidence="1">The complex is composed of two ATP-binding proteins (PstB), two transmembrane proteins (PstC and PstA) and a solute-binding protein (PstS).</text>
</comment>
<comment type="subcellular location">
    <subcellularLocation>
        <location evidence="1">Cell membrane</location>
        <topology evidence="1">Peripheral membrane protein</topology>
    </subcellularLocation>
</comment>
<comment type="similarity">
    <text evidence="1">Belongs to the ABC transporter superfamily. Phosphate importer (TC 3.A.1.7) family.</text>
</comment>
<keyword id="KW-0067">ATP-binding</keyword>
<keyword id="KW-1003">Cell membrane</keyword>
<keyword id="KW-0472">Membrane</keyword>
<keyword id="KW-0547">Nucleotide-binding</keyword>
<keyword id="KW-0592">Phosphate transport</keyword>
<keyword id="KW-1185">Reference proteome</keyword>
<keyword id="KW-1278">Translocase</keyword>
<keyword id="KW-0813">Transport</keyword>
<organism>
    <name type="scientific">Mycoplasma pneumoniae (strain ATCC 29342 / M129 / Subtype 1)</name>
    <name type="common">Mycoplasmoides pneumoniae</name>
    <dbReference type="NCBI Taxonomy" id="272634"/>
    <lineage>
        <taxon>Bacteria</taxon>
        <taxon>Bacillati</taxon>
        <taxon>Mycoplasmatota</taxon>
        <taxon>Mycoplasmoidales</taxon>
        <taxon>Mycoplasmoidaceae</taxon>
        <taxon>Mycoplasmoides</taxon>
    </lineage>
</organism>
<evidence type="ECO:0000255" key="1">
    <source>
        <dbReference type="HAMAP-Rule" id="MF_01702"/>
    </source>
</evidence>